<protein>
    <recommendedName>
        <fullName>Hydroxysteroid 11-beta-dehydrogenase 1-like protein</fullName>
        <ecNumber evidence="2">1.1.1.-</ecNumber>
    </recommendedName>
    <alternativeName>
        <fullName>11-beta-hydroxysteroid dehydrogenase type 3</fullName>
        <shortName>11-DH3</shortName>
        <shortName>11-beta-HSD3</shortName>
    </alternativeName>
</protein>
<sequence length="287" mass="31918">MKLYAKLLLCSICVAFIAVRWSAPSFNEESLKGARVLVTGASTGIGEQLAYHYARLGAQIVITARRGNVLEQVVSKCREMGAQKAFYIPADMANPSDADLVVKYAIEQLGGLDYLVLNHIGPSPYQMWDGDVQHTRWLLEVNFLSYLQMAQKALPTLEKSKGSIVVVSSLLGKICGPFALPYASTKFALNGFFGGLQNELAMQKSNVSITICILGLIDTDSAMEKIKGYINMTAYPSHEAALQIIQAGATRQSESFYPWYTFYATLFRDWFPYLRDKVIQNSYTYNP</sequence>
<feature type="signal peptide" evidence="3">
    <location>
        <begin position="1"/>
        <end position="22"/>
    </location>
</feature>
<feature type="chain" id="PRO_0000316819" description="Hydroxysteroid 11-beta-dehydrogenase 1-like protein">
    <location>
        <begin position="23"/>
        <end position="287"/>
    </location>
</feature>
<feature type="active site" description="Proton acceptor" evidence="4">
    <location>
        <position position="182"/>
    </location>
</feature>
<feature type="binding site" evidence="1">
    <location>
        <begin position="40"/>
        <end position="66"/>
    </location>
    <ligand>
        <name>NADP(+)</name>
        <dbReference type="ChEBI" id="CHEBI:58349"/>
    </ligand>
</feature>
<feature type="binding site" evidence="1">
    <location>
        <begin position="91"/>
        <end position="92"/>
    </location>
    <ligand>
        <name>NADP(+)</name>
        <dbReference type="ChEBI" id="CHEBI:58349"/>
    </ligand>
</feature>
<feature type="binding site" evidence="1">
    <location>
        <begin position="118"/>
        <end position="120"/>
    </location>
    <ligand>
        <name>NADP(+)</name>
        <dbReference type="ChEBI" id="CHEBI:58349"/>
    </ligand>
</feature>
<feature type="binding site" evidence="1">
    <location>
        <position position="169"/>
    </location>
    <ligand>
        <name>substrate</name>
    </ligand>
</feature>
<feature type="binding site" evidence="1">
    <location>
        <begin position="182"/>
        <end position="186"/>
    </location>
    <ligand>
        <name>NADP(+)</name>
        <dbReference type="ChEBI" id="CHEBI:58349"/>
    </ligand>
</feature>
<feature type="binding site" evidence="1">
    <location>
        <begin position="215"/>
        <end position="221"/>
    </location>
    <ligand>
        <name>NADP(+)</name>
        <dbReference type="ChEBI" id="CHEBI:58349"/>
    </ligand>
</feature>
<gene>
    <name type="primary">hsd11b1l</name>
    <name type="synonym">hsd11b3</name>
    <name type="synonym">hsd3</name>
    <name type="ORF">si:dkey-78l4.15</name>
    <name type="ORF">zgc:56373</name>
</gene>
<evidence type="ECO:0000250" key="1"/>
<evidence type="ECO:0000250" key="2">
    <source>
        <dbReference type="UniProtKB" id="Q7Z5J1"/>
    </source>
</evidence>
<evidence type="ECO:0000255" key="3"/>
<evidence type="ECO:0000255" key="4">
    <source>
        <dbReference type="PROSITE-ProRule" id="PRU10001"/>
    </source>
</evidence>
<evidence type="ECO:0000305" key="5"/>
<reference key="1">
    <citation type="submission" date="2004-03" db="EMBL/GenBank/DDBJ databases">
        <authorList>
            <person name="Huang C.Q."/>
            <person name="Zhou J.L."/>
            <person name="Wu S.L."/>
        </authorList>
    </citation>
    <scope>NUCLEOTIDE SEQUENCE [MRNA]</scope>
</reference>
<reference key="2">
    <citation type="journal article" date="2013" name="Nature">
        <title>The zebrafish reference genome sequence and its relationship to the human genome.</title>
        <authorList>
            <person name="Howe K."/>
            <person name="Clark M.D."/>
            <person name="Torroja C.F."/>
            <person name="Torrance J."/>
            <person name="Berthelot C."/>
            <person name="Muffato M."/>
            <person name="Collins J.E."/>
            <person name="Humphray S."/>
            <person name="McLaren K."/>
            <person name="Matthews L."/>
            <person name="McLaren S."/>
            <person name="Sealy I."/>
            <person name="Caccamo M."/>
            <person name="Churcher C."/>
            <person name="Scott C."/>
            <person name="Barrett J.C."/>
            <person name="Koch R."/>
            <person name="Rauch G.J."/>
            <person name="White S."/>
            <person name="Chow W."/>
            <person name="Kilian B."/>
            <person name="Quintais L.T."/>
            <person name="Guerra-Assuncao J.A."/>
            <person name="Zhou Y."/>
            <person name="Gu Y."/>
            <person name="Yen J."/>
            <person name="Vogel J.H."/>
            <person name="Eyre T."/>
            <person name="Redmond S."/>
            <person name="Banerjee R."/>
            <person name="Chi J."/>
            <person name="Fu B."/>
            <person name="Langley E."/>
            <person name="Maguire S.F."/>
            <person name="Laird G.K."/>
            <person name="Lloyd D."/>
            <person name="Kenyon E."/>
            <person name="Donaldson S."/>
            <person name="Sehra H."/>
            <person name="Almeida-King J."/>
            <person name="Loveland J."/>
            <person name="Trevanion S."/>
            <person name="Jones M."/>
            <person name="Quail M."/>
            <person name="Willey D."/>
            <person name="Hunt A."/>
            <person name="Burton J."/>
            <person name="Sims S."/>
            <person name="McLay K."/>
            <person name="Plumb B."/>
            <person name="Davis J."/>
            <person name="Clee C."/>
            <person name="Oliver K."/>
            <person name="Clark R."/>
            <person name="Riddle C."/>
            <person name="Elliot D."/>
            <person name="Threadgold G."/>
            <person name="Harden G."/>
            <person name="Ware D."/>
            <person name="Begum S."/>
            <person name="Mortimore B."/>
            <person name="Kerry G."/>
            <person name="Heath P."/>
            <person name="Phillimore B."/>
            <person name="Tracey A."/>
            <person name="Corby N."/>
            <person name="Dunn M."/>
            <person name="Johnson C."/>
            <person name="Wood J."/>
            <person name="Clark S."/>
            <person name="Pelan S."/>
            <person name="Griffiths G."/>
            <person name="Smith M."/>
            <person name="Glithero R."/>
            <person name="Howden P."/>
            <person name="Barker N."/>
            <person name="Lloyd C."/>
            <person name="Stevens C."/>
            <person name="Harley J."/>
            <person name="Holt K."/>
            <person name="Panagiotidis G."/>
            <person name="Lovell J."/>
            <person name="Beasley H."/>
            <person name="Henderson C."/>
            <person name="Gordon D."/>
            <person name="Auger K."/>
            <person name="Wright D."/>
            <person name="Collins J."/>
            <person name="Raisen C."/>
            <person name="Dyer L."/>
            <person name="Leung K."/>
            <person name="Robertson L."/>
            <person name="Ambridge K."/>
            <person name="Leongamornlert D."/>
            <person name="McGuire S."/>
            <person name="Gilderthorp R."/>
            <person name="Griffiths C."/>
            <person name="Manthravadi D."/>
            <person name="Nichol S."/>
            <person name="Barker G."/>
            <person name="Whitehead S."/>
            <person name="Kay M."/>
            <person name="Brown J."/>
            <person name="Murnane C."/>
            <person name="Gray E."/>
            <person name="Humphries M."/>
            <person name="Sycamore N."/>
            <person name="Barker D."/>
            <person name="Saunders D."/>
            <person name="Wallis J."/>
            <person name="Babbage A."/>
            <person name="Hammond S."/>
            <person name="Mashreghi-Mohammadi M."/>
            <person name="Barr L."/>
            <person name="Martin S."/>
            <person name="Wray P."/>
            <person name="Ellington A."/>
            <person name="Matthews N."/>
            <person name="Ellwood M."/>
            <person name="Woodmansey R."/>
            <person name="Clark G."/>
            <person name="Cooper J."/>
            <person name="Tromans A."/>
            <person name="Grafham D."/>
            <person name="Skuce C."/>
            <person name="Pandian R."/>
            <person name="Andrews R."/>
            <person name="Harrison E."/>
            <person name="Kimberley A."/>
            <person name="Garnett J."/>
            <person name="Fosker N."/>
            <person name="Hall R."/>
            <person name="Garner P."/>
            <person name="Kelly D."/>
            <person name="Bird C."/>
            <person name="Palmer S."/>
            <person name="Gehring I."/>
            <person name="Berger A."/>
            <person name="Dooley C.M."/>
            <person name="Ersan-Urun Z."/>
            <person name="Eser C."/>
            <person name="Geiger H."/>
            <person name="Geisler M."/>
            <person name="Karotki L."/>
            <person name="Kirn A."/>
            <person name="Konantz J."/>
            <person name="Konantz M."/>
            <person name="Oberlander M."/>
            <person name="Rudolph-Geiger S."/>
            <person name="Teucke M."/>
            <person name="Lanz C."/>
            <person name="Raddatz G."/>
            <person name="Osoegawa K."/>
            <person name="Zhu B."/>
            <person name="Rapp A."/>
            <person name="Widaa S."/>
            <person name="Langford C."/>
            <person name="Yang F."/>
            <person name="Schuster S.C."/>
            <person name="Carter N.P."/>
            <person name="Harrow J."/>
            <person name="Ning Z."/>
            <person name="Herrero J."/>
            <person name="Searle S.M."/>
            <person name="Enright A."/>
            <person name="Geisler R."/>
            <person name="Plasterk R.H."/>
            <person name="Lee C."/>
            <person name="Westerfield M."/>
            <person name="de Jong P.J."/>
            <person name="Zon L.I."/>
            <person name="Postlethwait J.H."/>
            <person name="Nusslein-Volhard C."/>
            <person name="Hubbard T.J."/>
            <person name="Roest Crollius H."/>
            <person name="Rogers J."/>
            <person name="Stemple D.L."/>
        </authorList>
    </citation>
    <scope>NUCLEOTIDE SEQUENCE [LARGE SCALE GENOMIC DNA]</scope>
    <source>
        <strain>Tuebingen</strain>
    </source>
</reference>
<reference key="3">
    <citation type="submission" date="2007-09" db="EMBL/GenBank/DDBJ databases">
        <authorList>
            <consortium name="NIH - Zebrafish Gene Collection (ZGC) project"/>
        </authorList>
    </citation>
    <scope>NUCLEOTIDE SEQUENCE [LARGE SCALE MRNA]</scope>
    <source>
        <tissue>Embryo</tissue>
    </source>
</reference>
<organism>
    <name type="scientific">Danio rerio</name>
    <name type="common">Zebrafish</name>
    <name type="synonym">Brachydanio rerio</name>
    <dbReference type="NCBI Taxonomy" id="7955"/>
    <lineage>
        <taxon>Eukaryota</taxon>
        <taxon>Metazoa</taxon>
        <taxon>Chordata</taxon>
        <taxon>Craniata</taxon>
        <taxon>Vertebrata</taxon>
        <taxon>Euteleostomi</taxon>
        <taxon>Actinopterygii</taxon>
        <taxon>Neopterygii</taxon>
        <taxon>Teleostei</taxon>
        <taxon>Ostariophysi</taxon>
        <taxon>Cypriniformes</taxon>
        <taxon>Danionidae</taxon>
        <taxon>Danioninae</taxon>
        <taxon>Danio</taxon>
    </lineage>
</organism>
<name>DHI1L_DANRE</name>
<keyword id="KW-0521">NADP</keyword>
<keyword id="KW-0560">Oxidoreductase</keyword>
<keyword id="KW-1185">Reference proteome</keyword>
<keyword id="KW-0964">Secreted</keyword>
<keyword id="KW-0732">Signal</keyword>
<dbReference type="EC" id="1.1.1.-" evidence="2"/>
<dbReference type="EMBL" id="AY578180">
    <property type="protein sequence ID" value="AAS89256.1"/>
    <property type="molecule type" value="mRNA"/>
</dbReference>
<dbReference type="EMBL" id="BX936298">
    <property type="protein sequence ID" value="CAK11206.1"/>
    <property type="molecule type" value="Genomic_DNA"/>
</dbReference>
<dbReference type="EMBL" id="BC071452">
    <property type="protein sequence ID" value="AAH71452.1"/>
    <property type="molecule type" value="mRNA"/>
</dbReference>
<dbReference type="EMBL" id="BC153593">
    <property type="protein sequence ID" value="AAI53594.1"/>
    <property type="molecule type" value="mRNA"/>
</dbReference>
<dbReference type="RefSeq" id="NP_001099077.1">
    <property type="nucleotide sequence ID" value="NM_001105607.1"/>
</dbReference>
<dbReference type="RefSeq" id="NP_956617.2">
    <property type="nucleotide sequence ID" value="NM_200323.2"/>
</dbReference>
<dbReference type="SMR" id="Q6PUF3"/>
<dbReference type="FunCoup" id="Q6PUF3">
    <property type="interactions" value="96"/>
</dbReference>
<dbReference type="STRING" id="7955.ENSDARP00000061738"/>
<dbReference type="PaxDb" id="7955-ENSDARP00000061738"/>
<dbReference type="Ensembl" id="ENSDART00000061739">
    <property type="protein sequence ID" value="ENSDARP00000061738"/>
    <property type="gene ID" value="ENSDARG00000071377"/>
</dbReference>
<dbReference type="Ensembl" id="ENSDART00000181695">
    <property type="protein sequence ID" value="ENSDARP00000155122"/>
    <property type="gene ID" value="ENSDARG00000109751"/>
</dbReference>
<dbReference type="GeneID" id="393293"/>
<dbReference type="KEGG" id="dre:393293"/>
<dbReference type="AGR" id="ZFIN:ZDB-GENE-040426-1002"/>
<dbReference type="CTD" id="393293"/>
<dbReference type="ZFIN" id="ZDB-GENE-040426-1002">
    <property type="gene designation" value="hsd11b1la"/>
</dbReference>
<dbReference type="eggNOG" id="KOG1205">
    <property type="taxonomic scope" value="Eukaryota"/>
</dbReference>
<dbReference type="HOGENOM" id="CLU_010194_2_1_1"/>
<dbReference type="InParanoid" id="Q6PUF3"/>
<dbReference type="OMA" id="EYTRWLM"/>
<dbReference type="OrthoDB" id="1933717at2759"/>
<dbReference type="PhylomeDB" id="Q6PUF3"/>
<dbReference type="TreeFam" id="TF329114"/>
<dbReference type="Reactome" id="R-DRE-194002">
    <property type="pathway name" value="Glucocorticoid biosynthesis"/>
</dbReference>
<dbReference type="Reactome" id="R-DRE-9757110">
    <property type="pathway name" value="Prednisone ADME"/>
</dbReference>
<dbReference type="PRO" id="PR:Q6PUF3"/>
<dbReference type="Proteomes" id="UP000000437">
    <property type="component" value="Alternate scaffold 22"/>
</dbReference>
<dbReference type="Proteomes" id="UP000000437">
    <property type="component" value="Chromosome 22"/>
</dbReference>
<dbReference type="Bgee" id="ENSDARG00000071377">
    <property type="expression patterns" value="Expressed in intestine and 23 other cell types or tissues"/>
</dbReference>
<dbReference type="ExpressionAtlas" id="Q6PUF3">
    <property type="expression patterns" value="baseline"/>
</dbReference>
<dbReference type="GO" id="GO:0005576">
    <property type="term" value="C:extracellular region"/>
    <property type="evidence" value="ECO:0007669"/>
    <property type="project" value="UniProtKB-SubCell"/>
</dbReference>
<dbReference type="GO" id="GO:0043231">
    <property type="term" value="C:intracellular membrane-bounded organelle"/>
    <property type="evidence" value="ECO:0000318"/>
    <property type="project" value="GO_Central"/>
</dbReference>
<dbReference type="GO" id="GO:0016491">
    <property type="term" value="F:oxidoreductase activity"/>
    <property type="evidence" value="ECO:0000318"/>
    <property type="project" value="GO_Central"/>
</dbReference>
<dbReference type="GO" id="GO:0016229">
    <property type="term" value="F:steroid dehydrogenase activity"/>
    <property type="evidence" value="ECO:0000250"/>
    <property type="project" value="ZFIN"/>
</dbReference>
<dbReference type="CDD" id="cd05332">
    <property type="entry name" value="11beta-HSD1_like_SDR_c"/>
    <property type="match status" value="1"/>
</dbReference>
<dbReference type="FunFam" id="3.40.50.720:FF:000329">
    <property type="entry name" value="Corticosteroid 11-beta-dehydrogenase isozyme 1"/>
    <property type="match status" value="1"/>
</dbReference>
<dbReference type="Gene3D" id="3.40.50.720">
    <property type="entry name" value="NAD(P)-binding Rossmann-like Domain"/>
    <property type="match status" value="1"/>
</dbReference>
<dbReference type="InterPro" id="IPR051253">
    <property type="entry name" value="11-beta-HSD"/>
</dbReference>
<dbReference type="InterPro" id="IPR036291">
    <property type="entry name" value="NAD(P)-bd_dom_sf"/>
</dbReference>
<dbReference type="InterPro" id="IPR020904">
    <property type="entry name" value="Sc_DH/Rdtase_CS"/>
</dbReference>
<dbReference type="InterPro" id="IPR002347">
    <property type="entry name" value="SDR_fam"/>
</dbReference>
<dbReference type="PANTHER" id="PTHR44279">
    <property type="entry name" value="HYDROXYSTEROID (11-BETA) DEHYDROGENASE 1-LIKE B-RELATED"/>
    <property type="match status" value="1"/>
</dbReference>
<dbReference type="PANTHER" id="PTHR44279:SF2">
    <property type="entry name" value="HYDROXYSTEROID (11-BETA) DEHYDROGENASE 1-LIKE B-RELATED"/>
    <property type="match status" value="1"/>
</dbReference>
<dbReference type="Pfam" id="PF00106">
    <property type="entry name" value="adh_short"/>
    <property type="match status" value="1"/>
</dbReference>
<dbReference type="PRINTS" id="PR00081">
    <property type="entry name" value="GDHRDH"/>
</dbReference>
<dbReference type="SUPFAM" id="SSF51735">
    <property type="entry name" value="NAD(P)-binding Rossmann-fold domains"/>
    <property type="match status" value="1"/>
</dbReference>
<dbReference type="PROSITE" id="PS00061">
    <property type="entry name" value="ADH_SHORT"/>
    <property type="match status" value="1"/>
</dbReference>
<proteinExistence type="evidence at transcript level"/>
<accession>Q6PUF3</accession>
<comment type="function">
    <text evidence="2">Unidirectional NADP(+)-dependent cortisol dehydrogenase (in vitro).</text>
</comment>
<comment type="catalytic activity">
    <reaction evidence="2">
        <text>cortisone + NADPH + H(+) = cortisol + NADP(+)</text>
        <dbReference type="Rhea" id="RHEA:68616"/>
        <dbReference type="ChEBI" id="CHEBI:15378"/>
        <dbReference type="ChEBI" id="CHEBI:16962"/>
        <dbReference type="ChEBI" id="CHEBI:17650"/>
        <dbReference type="ChEBI" id="CHEBI:57783"/>
        <dbReference type="ChEBI" id="CHEBI:58349"/>
    </reaction>
    <physiologicalReaction direction="right-to-left" evidence="2">
        <dbReference type="Rhea" id="RHEA:68618"/>
    </physiologicalReaction>
</comment>
<comment type="subcellular location">
    <subcellularLocation>
        <location evidence="5">Secreted</location>
    </subcellularLocation>
</comment>
<comment type="similarity">
    <text evidence="5">Belongs to the short-chain dehydrogenases/reductases (SDR) family.</text>
</comment>
<comment type="caution">
    <text evidence="5">Present in human, non-human primate, sheep, pig and many other higher organisms, whereas an ortholog is absent in the genomes of mouse, rat and rabbit.</text>
</comment>